<sequence>MARIMSWHYGKAITLFVCLGPVALSLDTFPDCSSGPLSKLAVCDTSLDVTTRARSLVNAMTFEEKVNNTQYNSPGVPRLGLPAYNWWSEALHGVAGSPGVEFADSGPFSYATSFPQPILLGATFDDDLIKQVATVVSTEGRAFGNAGRAGLDFWTPNINPFRDARWGRGQETPGEDPLHVSRYVYHLVDGLQNGIGPANPKVVATCKHFAAYDLEDWNGVVRHSFNAEVSTQDLSEFYLPPFKSCARDAKVDAVMCSYNALNGVPACADSYLLQTILREHWKWDEPGHWITGDCGAIDDIYNGHNYTKTPAEAAATALNAGTDLDCGTVFPKYLGQAADEGLYTNKTLDKALVRLYSSLVKLGYFDPAEDQPYRSIGWKDVDSPAAEALAHKAAVEGIVLLKNDKTLPLKAKGTLALIGPYANATKQMQGNYEGPPKYIRTLLWAATQAGYDVKYVAGTAINANSTAGFDAALSAAKQADVVVYAGGIDNTIEAEGHDRTTIVWPGNQLDLIDQLSKIGKPLVVVQFGGGQVDDSSLLSNPHVNALLWTGYPSQEGGSAIFDILTGKTAPAGRLPVTQYPADYVNQVPLTDMALRPGSNTPGRTYRWYDKAVLPFGFGLHYTTFKISWPRRALGPYDTAALVSRSPKNVPIDRAAFDTFHIQVTNTGKTTSDYVALLFLKTIDAGPKPYPLKTLVGYTRAKQIKPGEKRSVDIKVSLGSLARTAENGDLVLYPGRYTLEVDVGENQYPTASFTVKGKEAILDSFPQPPETR</sequence>
<reference key="1">
    <citation type="journal article" date="2008" name="PLoS Genet.">
        <title>Genomic islands in the pathogenic filamentous fungus Aspergillus fumigatus.</title>
        <authorList>
            <person name="Fedorova N.D."/>
            <person name="Khaldi N."/>
            <person name="Joardar V.S."/>
            <person name="Maiti R."/>
            <person name="Amedeo P."/>
            <person name="Anderson M.J."/>
            <person name="Crabtree J."/>
            <person name="Silva J.C."/>
            <person name="Badger J.H."/>
            <person name="Albarraq A."/>
            <person name="Angiuoli S."/>
            <person name="Bussey H."/>
            <person name="Bowyer P."/>
            <person name="Cotty P.J."/>
            <person name="Dyer P.S."/>
            <person name="Egan A."/>
            <person name="Galens K."/>
            <person name="Fraser-Liggett C.M."/>
            <person name="Haas B.J."/>
            <person name="Inman J.M."/>
            <person name="Kent R."/>
            <person name="Lemieux S."/>
            <person name="Malavazi I."/>
            <person name="Orvis J."/>
            <person name="Roemer T."/>
            <person name="Ronning C.M."/>
            <person name="Sundaram J.P."/>
            <person name="Sutton G."/>
            <person name="Turner G."/>
            <person name="Venter J.C."/>
            <person name="White O.R."/>
            <person name="Whitty B.R."/>
            <person name="Youngman P."/>
            <person name="Wolfe K.H."/>
            <person name="Goldman G.H."/>
            <person name="Wortman J.R."/>
            <person name="Jiang B."/>
            <person name="Denning D.W."/>
            <person name="Nierman W.C."/>
        </authorList>
    </citation>
    <scope>NUCLEOTIDE SEQUENCE [LARGE SCALE GENOMIC DNA]</scope>
    <source>
        <strain>ATCC 1020 / DSM 3700 / CBS 544.65 / FGSC A1164 / JCM 1740 / NRRL 181 / WB 181</strain>
    </source>
</reference>
<protein>
    <recommendedName>
        <fullName>Probable exo-1,4-beta-xylosidase xlnD</fullName>
        <ecNumber>3.2.1.37</ecNumber>
    </recommendedName>
    <alternativeName>
        <fullName>1,4-beta-D-xylan xylohydrolase xlnD</fullName>
    </alternativeName>
    <alternativeName>
        <fullName>Beta-xylosidase A</fullName>
    </alternativeName>
    <alternativeName>
        <fullName>Beta-xylosidase xlnD</fullName>
    </alternativeName>
    <alternativeName>
        <fullName>Xylobiase xlnD</fullName>
    </alternativeName>
</protein>
<proteinExistence type="inferred from homology"/>
<keyword id="KW-0119">Carbohydrate metabolism</keyword>
<keyword id="KW-0325">Glycoprotein</keyword>
<keyword id="KW-0326">Glycosidase</keyword>
<keyword id="KW-0378">Hydrolase</keyword>
<keyword id="KW-0624">Polysaccharide degradation</keyword>
<keyword id="KW-1185">Reference proteome</keyword>
<keyword id="KW-0964">Secreted</keyword>
<keyword id="KW-0732">Signal</keyword>
<keyword id="KW-0858">Xylan degradation</keyword>
<dbReference type="EC" id="3.2.1.37"/>
<dbReference type="EMBL" id="DS027697">
    <property type="protein sequence ID" value="EAW16964.1"/>
    <property type="molecule type" value="Genomic_DNA"/>
</dbReference>
<dbReference type="RefSeq" id="XP_001258861.1">
    <property type="nucleotide sequence ID" value="XM_001258860.1"/>
</dbReference>
<dbReference type="SMR" id="A1DJS5"/>
<dbReference type="STRING" id="331117.A1DJS5"/>
<dbReference type="GlyCosmos" id="A1DJS5">
    <property type="glycosylation" value="5 sites, No reported glycans"/>
</dbReference>
<dbReference type="EnsemblFungi" id="EAW16964">
    <property type="protein sequence ID" value="EAW16964"/>
    <property type="gene ID" value="NFIA_003180"/>
</dbReference>
<dbReference type="GeneID" id="4585718"/>
<dbReference type="KEGG" id="nfi:NFIA_003180"/>
<dbReference type="VEuPathDB" id="FungiDB:NFIA_003180"/>
<dbReference type="eggNOG" id="ENOG502QQ55">
    <property type="taxonomic scope" value="Eukaryota"/>
</dbReference>
<dbReference type="HOGENOM" id="CLU_004542_5_3_1"/>
<dbReference type="OMA" id="KVYTKVC"/>
<dbReference type="OrthoDB" id="47059at2759"/>
<dbReference type="UniPathway" id="UPA00114"/>
<dbReference type="Proteomes" id="UP000006702">
    <property type="component" value="Unassembled WGS sequence"/>
</dbReference>
<dbReference type="GO" id="GO:0005576">
    <property type="term" value="C:extracellular region"/>
    <property type="evidence" value="ECO:0007669"/>
    <property type="project" value="UniProtKB-SubCell"/>
</dbReference>
<dbReference type="GO" id="GO:0046556">
    <property type="term" value="F:alpha-L-arabinofuranosidase activity"/>
    <property type="evidence" value="ECO:0007669"/>
    <property type="project" value="TreeGrafter"/>
</dbReference>
<dbReference type="GO" id="GO:0009044">
    <property type="term" value="F:xylan 1,4-beta-xylosidase activity"/>
    <property type="evidence" value="ECO:0007669"/>
    <property type="project" value="UniProtKB-EC"/>
</dbReference>
<dbReference type="GO" id="GO:0031222">
    <property type="term" value="P:arabinan catabolic process"/>
    <property type="evidence" value="ECO:0007669"/>
    <property type="project" value="TreeGrafter"/>
</dbReference>
<dbReference type="GO" id="GO:0045493">
    <property type="term" value="P:xylan catabolic process"/>
    <property type="evidence" value="ECO:0007669"/>
    <property type="project" value="UniProtKB-UniPathway"/>
</dbReference>
<dbReference type="FunFam" id="2.60.40.10:FF:001420">
    <property type="entry name" value="Exo-1,4-beta-xylosidase xlnD"/>
    <property type="match status" value="1"/>
</dbReference>
<dbReference type="FunFam" id="3.40.50.1700:FF:000007">
    <property type="entry name" value="Exo-1,4-beta-xylosidase xlnD"/>
    <property type="match status" value="1"/>
</dbReference>
<dbReference type="FunFam" id="3.20.20.300:FF:000013">
    <property type="entry name" value="Probable exo-1,4-beta-xylosidase xlnD"/>
    <property type="match status" value="1"/>
</dbReference>
<dbReference type="Gene3D" id="3.40.50.1700">
    <property type="entry name" value="Glycoside hydrolase family 3 C-terminal domain"/>
    <property type="match status" value="1"/>
</dbReference>
<dbReference type="Gene3D" id="3.20.20.300">
    <property type="entry name" value="Glycoside hydrolase, family 3, N-terminal domain"/>
    <property type="match status" value="1"/>
</dbReference>
<dbReference type="Gene3D" id="2.60.40.10">
    <property type="entry name" value="Immunoglobulins"/>
    <property type="match status" value="1"/>
</dbReference>
<dbReference type="InterPro" id="IPR044993">
    <property type="entry name" value="BXL"/>
</dbReference>
<dbReference type="InterPro" id="IPR026891">
    <property type="entry name" value="Fn3-like"/>
</dbReference>
<dbReference type="InterPro" id="IPR002772">
    <property type="entry name" value="Glyco_hydro_3_C"/>
</dbReference>
<dbReference type="InterPro" id="IPR036881">
    <property type="entry name" value="Glyco_hydro_3_C_sf"/>
</dbReference>
<dbReference type="InterPro" id="IPR001764">
    <property type="entry name" value="Glyco_hydro_3_N"/>
</dbReference>
<dbReference type="InterPro" id="IPR036962">
    <property type="entry name" value="Glyco_hydro_3_N_sf"/>
</dbReference>
<dbReference type="InterPro" id="IPR017853">
    <property type="entry name" value="Glycoside_hydrolase_SF"/>
</dbReference>
<dbReference type="InterPro" id="IPR013783">
    <property type="entry name" value="Ig-like_fold"/>
</dbReference>
<dbReference type="PANTHER" id="PTHR42721:SF3">
    <property type="entry name" value="BETA-D-XYLOSIDASE 5-RELATED"/>
    <property type="match status" value="1"/>
</dbReference>
<dbReference type="PANTHER" id="PTHR42721">
    <property type="entry name" value="SUGAR HYDROLASE-RELATED"/>
    <property type="match status" value="1"/>
</dbReference>
<dbReference type="Pfam" id="PF14310">
    <property type="entry name" value="Fn3-like"/>
    <property type="match status" value="1"/>
</dbReference>
<dbReference type="Pfam" id="PF00933">
    <property type="entry name" value="Glyco_hydro_3"/>
    <property type="match status" value="1"/>
</dbReference>
<dbReference type="Pfam" id="PF01915">
    <property type="entry name" value="Glyco_hydro_3_C"/>
    <property type="match status" value="1"/>
</dbReference>
<dbReference type="PRINTS" id="PR00133">
    <property type="entry name" value="GLHYDRLASE3"/>
</dbReference>
<dbReference type="SMART" id="SM01217">
    <property type="entry name" value="Fn3_like"/>
    <property type="match status" value="1"/>
</dbReference>
<dbReference type="SUPFAM" id="SSF51445">
    <property type="entry name" value="(Trans)glycosidases"/>
    <property type="match status" value="1"/>
</dbReference>
<dbReference type="SUPFAM" id="SSF52279">
    <property type="entry name" value="Beta-D-glucan exohydrolase, C-terminal domain"/>
    <property type="match status" value="1"/>
</dbReference>
<comment type="function">
    <text evidence="1">Xylan 1,4-beta-xylosidase involved in the hydrolysis of xylan, a major structural heterogeneous polysaccharide found in plant biomass representing the second most abundant polysaccharide in the biosphere, after cellulose.</text>
</comment>
<comment type="catalytic activity">
    <reaction>
        <text>Hydrolysis of (1-&gt;4)-beta-D-xylans, to remove successive D-xylose residues from the non-reducing termini.</text>
        <dbReference type="EC" id="3.2.1.37"/>
    </reaction>
</comment>
<comment type="pathway">
    <text>Glycan degradation; xylan degradation.</text>
</comment>
<comment type="subcellular location">
    <subcellularLocation>
        <location evidence="1">Secreted</location>
    </subcellularLocation>
</comment>
<comment type="similarity">
    <text evidence="3">Belongs to the glycosyl hydrolase 3 family.</text>
</comment>
<feature type="signal peptide" evidence="2">
    <location>
        <begin position="1"/>
        <end position="25"/>
    </location>
</feature>
<feature type="chain" id="PRO_0000393294" description="Probable exo-1,4-beta-xylosidase xlnD">
    <location>
        <begin position="26"/>
        <end position="771"/>
    </location>
</feature>
<feature type="active site" evidence="1">
    <location>
        <position position="293"/>
    </location>
</feature>
<feature type="glycosylation site" description="N-linked (GlcNAc...) asparagine" evidence="2">
    <location>
        <position position="67"/>
    </location>
</feature>
<feature type="glycosylation site" description="N-linked (GlcNAc...) asparagine" evidence="2">
    <location>
        <position position="305"/>
    </location>
</feature>
<feature type="glycosylation site" description="N-linked (GlcNAc...) asparagine" evidence="2">
    <location>
        <position position="345"/>
    </location>
</feature>
<feature type="glycosylation site" description="N-linked (GlcNAc...) asparagine" evidence="2">
    <location>
        <position position="423"/>
    </location>
</feature>
<feature type="glycosylation site" description="N-linked (GlcNAc...) asparagine" evidence="2">
    <location>
        <position position="464"/>
    </location>
</feature>
<gene>
    <name type="primary">xlnD</name>
    <name type="synonym">xylA</name>
    <name type="ORF">NFIA_003180</name>
</gene>
<accession>A1DJS5</accession>
<organism>
    <name type="scientific">Neosartorya fischeri (strain ATCC 1020 / DSM 3700 / CBS 544.65 / FGSC A1164 / JCM 1740 / NRRL 181 / WB 181)</name>
    <name type="common">Aspergillus fischerianus</name>
    <dbReference type="NCBI Taxonomy" id="331117"/>
    <lineage>
        <taxon>Eukaryota</taxon>
        <taxon>Fungi</taxon>
        <taxon>Dikarya</taxon>
        <taxon>Ascomycota</taxon>
        <taxon>Pezizomycotina</taxon>
        <taxon>Eurotiomycetes</taxon>
        <taxon>Eurotiomycetidae</taxon>
        <taxon>Eurotiales</taxon>
        <taxon>Aspergillaceae</taxon>
        <taxon>Aspergillus</taxon>
        <taxon>Aspergillus subgen. Fumigati</taxon>
    </lineage>
</organism>
<name>XYND_NEOFI</name>
<evidence type="ECO:0000250" key="1"/>
<evidence type="ECO:0000255" key="2"/>
<evidence type="ECO:0000305" key="3"/>